<reference key="1">
    <citation type="journal article" date="2005" name="Nature">
        <title>The map-based sequence of the rice genome.</title>
        <authorList>
            <consortium name="International rice genome sequencing project (IRGSP)"/>
        </authorList>
    </citation>
    <scope>NUCLEOTIDE SEQUENCE [LARGE SCALE GENOMIC DNA]</scope>
    <source>
        <strain>cv. Nipponbare</strain>
    </source>
</reference>
<reference key="2">
    <citation type="journal article" date="2008" name="Nucleic Acids Res.">
        <title>The rice annotation project database (RAP-DB): 2008 update.</title>
        <authorList>
            <consortium name="The rice annotation project (RAP)"/>
        </authorList>
    </citation>
    <scope>GENOME REANNOTATION</scope>
    <source>
        <strain>cv. Nipponbare</strain>
    </source>
</reference>
<reference key="3">
    <citation type="journal article" date="2013" name="Rice">
        <title>Improvement of the Oryza sativa Nipponbare reference genome using next generation sequence and optical map data.</title>
        <authorList>
            <person name="Kawahara Y."/>
            <person name="de la Bastide M."/>
            <person name="Hamilton J.P."/>
            <person name="Kanamori H."/>
            <person name="McCombie W.R."/>
            <person name="Ouyang S."/>
            <person name="Schwartz D.C."/>
            <person name="Tanaka T."/>
            <person name="Wu J."/>
            <person name="Zhou S."/>
            <person name="Childs K.L."/>
            <person name="Davidson R.M."/>
            <person name="Lin H."/>
            <person name="Quesada-Ocampo L."/>
            <person name="Vaillancourt B."/>
            <person name="Sakai H."/>
            <person name="Lee S.S."/>
            <person name="Kim J."/>
            <person name="Numa H."/>
            <person name="Itoh T."/>
            <person name="Buell C.R."/>
            <person name="Matsumoto T."/>
        </authorList>
    </citation>
    <scope>GENOME REANNOTATION</scope>
    <source>
        <strain>cv. Nipponbare</strain>
    </source>
</reference>
<reference key="4">
    <citation type="journal article" date="2005" name="PLoS Biol.">
        <title>The genomes of Oryza sativa: a history of duplications.</title>
        <authorList>
            <person name="Yu J."/>
            <person name="Wang J."/>
            <person name="Lin W."/>
            <person name="Li S."/>
            <person name="Li H."/>
            <person name="Zhou J."/>
            <person name="Ni P."/>
            <person name="Dong W."/>
            <person name="Hu S."/>
            <person name="Zeng C."/>
            <person name="Zhang J."/>
            <person name="Zhang Y."/>
            <person name="Li R."/>
            <person name="Xu Z."/>
            <person name="Li S."/>
            <person name="Li X."/>
            <person name="Zheng H."/>
            <person name="Cong L."/>
            <person name="Lin L."/>
            <person name="Yin J."/>
            <person name="Geng J."/>
            <person name="Li G."/>
            <person name="Shi J."/>
            <person name="Liu J."/>
            <person name="Lv H."/>
            <person name="Li J."/>
            <person name="Wang J."/>
            <person name="Deng Y."/>
            <person name="Ran L."/>
            <person name="Shi X."/>
            <person name="Wang X."/>
            <person name="Wu Q."/>
            <person name="Li C."/>
            <person name="Ren X."/>
            <person name="Wang J."/>
            <person name="Wang X."/>
            <person name="Li D."/>
            <person name="Liu D."/>
            <person name="Zhang X."/>
            <person name="Ji Z."/>
            <person name="Zhao W."/>
            <person name="Sun Y."/>
            <person name="Zhang Z."/>
            <person name="Bao J."/>
            <person name="Han Y."/>
            <person name="Dong L."/>
            <person name="Ji J."/>
            <person name="Chen P."/>
            <person name="Wu S."/>
            <person name="Liu J."/>
            <person name="Xiao Y."/>
            <person name="Bu D."/>
            <person name="Tan J."/>
            <person name="Yang L."/>
            <person name="Ye C."/>
            <person name="Zhang J."/>
            <person name="Xu J."/>
            <person name="Zhou Y."/>
            <person name="Yu Y."/>
            <person name="Zhang B."/>
            <person name="Zhuang S."/>
            <person name="Wei H."/>
            <person name="Liu B."/>
            <person name="Lei M."/>
            <person name="Yu H."/>
            <person name="Li Y."/>
            <person name="Xu H."/>
            <person name="Wei S."/>
            <person name="He X."/>
            <person name="Fang L."/>
            <person name="Zhang Z."/>
            <person name="Zhang Y."/>
            <person name="Huang X."/>
            <person name="Su Z."/>
            <person name="Tong W."/>
            <person name="Li J."/>
            <person name="Tong Z."/>
            <person name="Li S."/>
            <person name="Ye J."/>
            <person name="Wang L."/>
            <person name="Fang L."/>
            <person name="Lei T."/>
            <person name="Chen C.-S."/>
            <person name="Chen H.-C."/>
            <person name="Xu Z."/>
            <person name="Li H."/>
            <person name="Huang H."/>
            <person name="Zhang F."/>
            <person name="Xu H."/>
            <person name="Li N."/>
            <person name="Zhao C."/>
            <person name="Li S."/>
            <person name="Dong L."/>
            <person name="Huang Y."/>
            <person name="Li L."/>
            <person name="Xi Y."/>
            <person name="Qi Q."/>
            <person name="Li W."/>
            <person name="Zhang B."/>
            <person name="Hu W."/>
            <person name="Zhang Y."/>
            <person name="Tian X."/>
            <person name="Jiao Y."/>
            <person name="Liang X."/>
            <person name="Jin J."/>
            <person name="Gao L."/>
            <person name="Zheng W."/>
            <person name="Hao B."/>
            <person name="Liu S.-M."/>
            <person name="Wang W."/>
            <person name="Yuan L."/>
            <person name="Cao M."/>
            <person name="McDermott J."/>
            <person name="Samudrala R."/>
            <person name="Wang J."/>
            <person name="Wong G.K.-S."/>
            <person name="Yang H."/>
        </authorList>
    </citation>
    <scope>NUCLEOTIDE SEQUENCE [LARGE SCALE GENOMIC DNA]</scope>
    <source>
        <strain>cv. Nipponbare</strain>
    </source>
</reference>
<reference key="5">
    <citation type="submission" date="2006-10" db="EMBL/GenBank/DDBJ databases">
        <title>Oryza sativa full length cDNA.</title>
        <authorList>
            <consortium name="The rice full-length cDNA consortium"/>
        </authorList>
    </citation>
    <scope>NUCLEOTIDE SEQUENCE [LARGE SCALE MRNA]</scope>
    <source>
        <strain>cv. Nipponbare</strain>
    </source>
</reference>
<reference key="6">
    <citation type="journal article" date="2009" name="Mol. Plant">
        <title>Comparative genomic study of the thioredoxin family in photosynthetic organisms with emphasis on Populus trichocarpa.</title>
        <authorList>
            <person name="Chibani K."/>
            <person name="Wingsle G."/>
            <person name="Jacquot J.P."/>
            <person name="Gelhaye E."/>
            <person name="Rouhier N."/>
        </authorList>
    </citation>
    <scope>GENE FAMILY</scope>
    <scope>NOMENCLATURE</scope>
</reference>
<organism>
    <name type="scientific">Oryza sativa subsp. japonica</name>
    <name type="common">Rice</name>
    <dbReference type="NCBI Taxonomy" id="39947"/>
    <lineage>
        <taxon>Eukaryota</taxon>
        <taxon>Viridiplantae</taxon>
        <taxon>Streptophyta</taxon>
        <taxon>Embryophyta</taxon>
        <taxon>Tracheophyta</taxon>
        <taxon>Spermatophyta</taxon>
        <taxon>Magnoliopsida</taxon>
        <taxon>Liliopsida</taxon>
        <taxon>Poales</taxon>
        <taxon>Poaceae</taxon>
        <taxon>BOP clade</taxon>
        <taxon>Oryzoideae</taxon>
        <taxon>Oryzeae</taxon>
        <taxon>Oryzinae</taxon>
        <taxon>Oryza</taxon>
        <taxon>Oryza sativa</taxon>
    </lineage>
</organism>
<dbReference type="EMBL" id="AP005173">
    <property type="protein sequence ID" value="BAC83857.1"/>
    <property type="molecule type" value="Genomic_DNA"/>
</dbReference>
<dbReference type="EMBL" id="AP008213">
    <property type="protein sequence ID" value="BAF21004.1"/>
    <property type="molecule type" value="Genomic_DNA"/>
</dbReference>
<dbReference type="EMBL" id="AP014963">
    <property type="protein sequence ID" value="BAT00419.1"/>
    <property type="molecule type" value="Genomic_DNA"/>
</dbReference>
<dbReference type="EMBL" id="CM000144">
    <property type="protein sequence ID" value="EAZ38983.1"/>
    <property type="molecule type" value="Genomic_DNA"/>
</dbReference>
<dbReference type="EMBL" id="AK241734">
    <property type="protein sequence ID" value="BAH01096.1"/>
    <property type="molecule type" value="mRNA"/>
</dbReference>
<dbReference type="RefSeq" id="XP_015646978.1">
    <property type="nucleotide sequence ID" value="XM_015791492.1"/>
</dbReference>
<dbReference type="SMR" id="Q6Z4I3"/>
<dbReference type="FunCoup" id="Q6Z4I3">
    <property type="interactions" value="2237"/>
</dbReference>
<dbReference type="STRING" id="39947.Q6Z4I3"/>
<dbReference type="PaxDb" id="39947-Q6Z4I3"/>
<dbReference type="EnsemblPlants" id="Os07t0190800-01">
    <property type="protein sequence ID" value="Os07t0190800-01"/>
    <property type="gene ID" value="Os07g0190800"/>
</dbReference>
<dbReference type="Gramene" id="Os07t0190800-01">
    <property type="protein sequence ID" value="Os07t0190800-01"/>
    <property type="gene ID" value="Os07g0190800"/>
</dbReference>
<dbReference type="KEGG" id="dosa:Os07g0190800"/>
<dbReference type="eggNOG" id="KOG0907">
    <property type="taxonomic scope" value="Eukaryota"/>
</dbReference>
<dbReference type="HOGENOM" id="CLU_090389_14_1_1"/>
<dbReference type="InParanoid" id="Q6Z4I3"/>
<dbReference type="OMA" id="STWHETH"/>
<dbReference type="OrthoDB" id="652282at2759"/>
<dbReference type="Proteomes" id="UP000000763">
    <property type="component" value="Chromosome 7"/>
</dbReference>
<dbReference type="Proteomes" id="UP000007752">
    <property type="component" value="Chromosome 7"/>
</dbReference>
<dbReference type="Proteomes" id="UP000059680">
    <property type="component" value="Chromosome 7"/>
</dbReference>
<dbReference type="GO" id="GO:0005737">
    <property type="term" value="C:cytoplasm"/>
    <property type="evidence" value="ECO:0007669"/>
    <property type="project" value="UniProtKB-SubCell"/>
</dbReference>
<dbReference type="CDD" id="cd02947">
    <property type="entry name" value="TRX_family"/>
    <property type="match status" value="1"/>
</dbReference>
<dbReference type="FunFam" id="3.40.30.10:FF:000245">
    <property type="entry name" value="Thioredoxin"/>
    <property type="match status" value="1"/>
</dbReference>
<dbReference type="Gene3D" id="3.40.30.10">
    <property type="entry name" value="Glutaredoxin"/>
    <property type="match status" value="1"/>
</dbReference>
<dbReference type="InterPro" id="IPR036249">
    <property type="entry name" value="Thioredoxin-like_sf"/>
</dbReference>
<dbReference type="InterPro" id="IPR017937">
    <property type="entry name" value="Thioredoxin_CS"/>
</dbReference>
<dbReference type="InterPro" id="IPR013766">
    <property type="entry name" value="Thioredoxin_domain"/>
</dbReference>
<dbReference type="InterPro" id="IPR050620">
    <property type="entry name" value="Thioredoxin_H-type-like"/>
</dbReference>
<dbReference type="PANTHER" id="PTHR10438">
    <property type="entry name" value="THIOREDOXIN"/>
    <property type="match status" value="1"/>
</dbReference>
<dbReference type="PANTHER" id="PTHR10438:SF463">
    <property type="entry name" value="THIOREDOXIN"/>
    <property type="match status" value="1"/>
</dbReference>
<dbReference type="Pfam" id="PF00085">
    <property type="entry name" value="Thioredoxin"/>
    <property type="match status" value="1"/>
</dbReference>
<dbReference type="PRINTS" id="PR00421">
    <property type="entry name" value="THIOREDOXIN"/>
</dbReference>
<dbReference type="SUPFAM" id="SSF52833">
    <property type="entry name" value="Thioredoxin-like"/>
    <property type="match status" value="1"/>
</dbReference>
<dbReference type="PROSITE" id="PS00194">
    <property type="entry name" value="THIOREDOXIN_1"/>
    <property type="match status" value="1"/>
</dbReference>
<dbReference type="PROSITE" id="PS51352">
    <property type="entry name" value="THIOREDOXIN_2"/>
    <property type="match status" value="1"/>
</dbReference>
<name>TRH21_ORYSJ</name>
<evidence type="ECO:0000250" key="1"/>
<evidence type="ECO:0000255" key="2">
    <source>
        <dbReference type="PROSITE-ProRule" id="PRU00691"/>
    </source>
</evidence>
<evidence type="ECO:0000256" key="3">
    <source>
        <dbReference type="SAM" id="MobiDB-lite"/>
    </source>
</evidence>
<evidence type="ECO:0000305" key="4"/>
<gene>
    <name type="ordered locus">Os07g0190800</name>
    <name type="ordered locus">LOC_Os07g09310</name>
    <name type="ORF">OsJ_23401</name>
    <name type="ORF">OSJNBb0003E08.27</name>
</gene>
<keyword id="KW-0963">Cytoplasm</keyword>
<keyword id="KW-1015">Disulfide bond</keyword>
<keyword id="KW-0249">Electron transport</keyword>
<keyword id="KW-0676">Redox-active center</keyword>
<keyword id="KW-1185">Reference proteome</keyword>
<keyword id="KW-0813">Transport</keyword>
<protein>
    <recommendedName>
        <fullName>Thioredoxin H2-1</fullName>
        <shortName>OsTrxh2-1</shortName>
    </recommendedName>
    <alternativeName>
        <fullName>OsTrx24</fullName>
    </alternativeName>
</protein>
<comment type="function">
    <text>Probable thiol-disulfide oxidoreductase that may be involved in the redox regulation of a number of cytosolic enzymes.</text>
</comment>
<comment type="subcellular location">
    <subcellularLocation>
        <location evidence="1">Cytoplasm</location>
    </subcellularLocation>
</comment>
<comment type="similarity">
    <text evidence="4">Belongs to the thioredoxin family. Plant H-type subfamily.</text>
</comment>
<feature type="chain" id="PRO_0000394826" description="Thioredoxin H2-1">
    <location>
        <begin position="1"/>
        <end position="138"/>
    </location>
</feature>
<feature type="domain" description="Thioredoxin" evidence="2">
    <location>
        <begin position="12"/>
        <end position="129"/>
    </location>
</feature>
<feature type="region of interest" description="Disordered" evidence="3">
    <location>
        <begin position="1"/>
        <end position="20"/>
    </location>
</feature>
<feature type="active site" description="Nucleophile" evidence="1">
    <location>
        <position position="55"/>
    </location>
</feature>
<feature type="active site" description="Nucleophile" evidence="1">
    <location>
        <position position="58"/>
    </location>
</feature>
<feature type="site" description="Deprotonates C-terminal active site Cys" evidence="1">
    <location>
        <position position="49"/>
    </location>
</feature>
<feature type="site" description="Contributes to redox potential value" evidence="1">
    <location>
        <position position="56"/>
    </location>
</feature>
<feature type="site" description="Contributes to redox potential value" evidence="1">
    <location>
        <position position="57"/>
    </location>
</feature>
<feature type="disulfide bond" description="Redox-active" evidence="2">
    <location>
        <begin position="55"/>
        <end position="58"/>
    </location>
</feature>
<accession>Q6Z4I3</accession>
<accession>A0A0P0X3N4</accession>
<proteinExistence type="evidence at transcript level"/>
<sequence length="138" mass="14898">MGGAFSTSKPKPAAGEEGGESAVVAVHSKAKWDELWDAHKNTTKLVVIDFSASWCGPCKMMEPVFKEMAGRFTDVAFLKVDVDELAEVARTWRVEAMPTFVLARGGEEVGRIVGADKDELEKTINTLRSSSSSTATTT</sequence>